<gene>
    <name evidence="1" type="primary">rpmA</name>
    <name evidence="1" type="synonym">rpl27</name>
    <name type="ordered locus">Ava_1515</name>
</gene>
<protein>
    <recommendedName>
        <fullName evidence="1">Large ribosomal subunit protein bL27</fullName>
    </recommendedName>
    <alternativeName>
        <fullName evidence="2">50S ribosomal protein L27</fullName>
    </alternativeName>
</protein>
<evidence type="ECO:0000255" key="1">
    <source>
        <dbReference type="HAMAP-Rule" id="MF_00539"/>
    </source>
</evidence>
<evidence type="ECO:0000305" key="2"/>
<keyword id="KW-0687">Ribonucleoprotein</keyword>
<keyword id="KW-0689">Ribosomal protein</keyword>
<sequence>MAHKKGTGSTRNGRDSNAQRLGVKRFGGQAVIAGNILVRQRGTKFHAGNNVGIGKDDTLFALVDGVVTFERKGKSRKKVSVYPAAAAAEAVAG</sequence>
<comment type="similarity">
    <text evidence="1">Belongs to the bacterial ribosomal protein bL27 family.</text>
</comment>
<organism>
    <name type="scientific">Trichormus variabilis (strain ATCC 29413 / PCC 7937)</name>
    <name type="common">Anabaena variabilis</name>
    <dbReference type="NCBI Taxonomy" id="240292"/>
    <lineage>
        <taxon>Bacteria</taxon>
        <taxon>Bacillati</taxon>
        <taxon>Cyanobacteriota</taxon>
        <taxon>Cyanophyceae</taxon>
        <taxon>Nostocales</taxon>
        <taxon>Nostocaceae</taxon>
        <taxon>Trichormus</taxon>
    </lineage>
</organism>
<reference key="1">
    <citation type="journal article" date="2014" name="Stand. Genomic Sci.">
        <title>Complete genome sequence of Anabaena variabilis ATCC 29413.</title>
        <authorList>
            <person name="Thiel T."/>
            <person name="Pratte B.S."/>
            <person name="Zhong J."/>
            <person name="Goodwin L."/>
            <person name="Copeland A."/>
            <person name="Lucas S."/>
            <person name="Han C."/>
            <person name="Pitluck S."/>
            <person name="Land M.L."/>
            <person name="Kyrpides N.C."/>
            <person name="Woyke T."/>
        </authorList>
    </citation>
    <scope>NUCLEOTIDE SEQUENCE [LARGE SCALE GENOMIC DNA]</scope>
    <source>
        <strain>ATCC 29413 / PCC 7937</strain>
    </source>
</reference>
<dbReference type="EMBL" id="CP000117">
    <property type="protein sequence ID" value="ABA21138.1"/>
    <property type="molecule type" value="Genomic_DNA"/>
</dbReference>
<dbReference type="SMR" id="Q3MCZ8"/>
<dbReference type="STRING" id="240292.Ava_1515"/>
<dbReference type="KEGG" id="ava:Ava_1515"/>
<dbReference type="eggNOG" id="COG0211">
    <property type="taxonomic scope" value="Bacteria"/>
</dbReference>
<dbReference type="HOGENOM" id="CLU_095424_4_0_3"/>
<dbReference type="Proteomes" id="UP000002533">
    <property type="component" value="Chromosome"/>
</dbReference>
<dbReference type="GO" id="GO:0022625">
    <property type="term" value="C:cytosolic large ribosomal subunit"/>
    <property type="evidence" value="ECO:0007669"/>
    <property type="project" value="TreeGrafter"/>
</dbReference>
<dbReference type="GO" id="GO:0003735">
    <property type="term" value="F:structural constituent of ribosome"/>
    <property type="evidence" value="ECO:0007669"/>
    <property type="project" value="InterPro"/>
</dbReference>
<dbReference type="GO" id="GO:0006412">
    <property type="term" value="P:translation"/>
    <property type="evidence" value="ECO:0007669"/>
    <property type="project" value="UniProtKB-UniRule"/>
</dbReference>
<dbReference type="FunFam" id="2.40.50.100:FF:000004">
    <property type="entry name" value="50S ribosomal protein L27"/>
    <property type="match status" value="1"/>
</dbReference>
<dbReference type="Gene3D" id="2.40.50.100">
    <property type="match status" value="1"/>
</dbReference>
<dbReference type="HAMAP" id="MF_00539">
    <property type="entry name" value="Ribosomal_bL27"/>
    <property type="match status" value="1"/>
</dbReference>
<dbReference type="InterPro" id="IPR001684">
    <property type="entry name" value="Ribosomal_bL27"/>
</dbReference>
<dbReference type="InterPro" id="IPR018261">
    <property type="entry name" value="Ribosomal_bL27_CS"/>
</dbReference>
<dbReference type="NCBIfam" id="TIGR00062">
    <property type="entry name" value="L27"/>
    <property type="match status" value="1"/>
</dbReference>
<dbReference type="PANTHER" id="PTHR15893:SF0">
    <property type="entry name" value="LARGE RIBOSOMAL SUBUNIT PROTEIN BL27M"/>
    <property type="match status" value="1"/>
</dbReference>
<dbReference type="PANTHER" id="PTHR15893">
    <property type="entry name" value="RIBOSOMAL PROTEIN L27"/>
    <property type="match status" value="1"/>
</dbReference>
<dbReference type="Pfam" id="PF01016">
    <property type="entry name" value="Ribosomal_L27"/>
    <property type="match status" value="1"/>
</dbReference>
<dbReference type="PRINTS" id="PR00063">
    <property type="entry name" value="RIBOSOMALL27"/>
</dbReference>
<dbReference type="SUPFAM" id="SSF110324">
    <property type="entry name" value="Ribosomal L27 protein-like"/>
    <property type="match status" value="1"/>
</dbReference>
<dbReference type="PROSITE" id="PS00831">
    <property type="entry name" value="RIBOSOMAL_L27"/>
    <property type="match status" value="1"/>
</dbReference>
<accession>Q3MCZ8</accession>
<feature type="chain" id="PRO_1000017406" description="Large ribosomal subunit protein bL27">
    <location>
        <begin position="1"/>
        <end position="93"/>
    </location>
</feature>
<name>RL27_TRIV2</name>
<proteinExistence type="inferred from homology"/>